<comment type="subcellular location">
    <subcellularLocation>
        <location evidence="1">Cytoplasm</location>
    </subcellularLocation>
</comment>
<comment type="similarity">
    <text evidence="2">Belongs to the GSKIP family.</text>
</comment>
<keyword id="KW-0963">Cytoplasm</keyword>
<keyword id="KW-1185">Reference proteome</keyword>
<evidence type="ECO:0000250" key="1"/>
<evidence type="ECO:0000305" key="2"/>
<dbReference type="EMBL" id="BC136180">
    <property type="protein sequence ID" value="AAI36181.1"/>
    <property type="molecule type" value="mRNA"/>
</dbReference>
<dbReference type="RefSeq" id="NP_001096457.1">
    <property type="nucleotide sequence ID" value="NM_001102987.1"/>
</dbReference>
<dbReference type="RefSeq" id="XP_012823344.1">
    <property type="nucleotide sequence ID" value="XM_012967890.3"/>
</dbReference>
<dbReference type="SMR" id="A4IIW5"/>
<dbReference type="FunCoup" id="A4IIW5">
    <property type="interactions" value="2777"/>
</dbReference>
<dbReference type="STRING" id="8364.ENSXETP00000048163"/>
<dbReference type="PaxDb" id="8364-ENSXETP00000030479"/>
<dbReference type="DNASU" id="100125074"/>
<dbReference type="GeneID" id="100125074"/>
<dbReference type="KEGG" id="xtr:100125074"/>
<dbReference type="AGR" id="Xenbase:XB-GENE-987914"/>
<dbReference type="CTD" id="51527"/>
<dbReference type="Xenbase" id="XB-GENE-987914">
    <property type="gene designation" value="gskip"/>
</dbReference>
<dbReference type="eggNOG" id="KOG3965">
    <property type="taxonomic scope" value="Eukaryota"/>
</dbReference>
<dbReference type="HOGENOM" id="CLU_143747_0_0_1"/>
<dbReference type="InParanoid" id="A4IIW5"/>
<dbReference type="OMA" id="FAVTEMH"/>
<dbReference type="OrthoDB" id="5804279at2759"/>
<dbReference type="PhylomeDB" id="A4IIW5"/>
<dbReference type="Proteomes" id="UP000008143">
    <property type="component" value="Chromosome 8"/>
</dbReference>
<dbReference type="Bgee" id="ENSXETG00000034977">
    <property type="expression patterns" value="Expressed in brain and 13 other cell types or tissues"/>
</dbReference>
<dbReference type="GO" id="GO:0005737">
    <property type="term" value="C:cytoplasm"/>
    <property type="evidence" value="ECO:0007669"/>
    <property type="project" value="UniProtKB-SubCell"/>
</dbReference>
<dbReference type="GO" id="GO:0060828">
    <property type="term" value="P:regulation of canonical Wnt signaling pathway"/>
    <property type="evidence" value="ECO:0007669"/>
    <property type="project" value="InterPro"/>
</dbReference>
<dbReference type="Gene3D" id="3.30.2280.10">
    <property type="entry name" value="Hypothetical protein (hspc210)"/>
    <property type="match status" value="1"/>
</dbReference>
<dbReference type="InterPro" id="IPR037395">
    <property type="entry name" value="GSKIP"/>
</dbReference>
<dbReference type="InterPro" id="IPR007967">
    <property type="entry name" value="GSKIP_dom"/>
</dbReference>
<dbReference type="InterPro" id="IPR023231">
    <property type="entry name" value="GSKIP_dom_sf"/>
</dbReference>
<dbReference type="PANTHER" id="PTHR12490">
    <property type="entry name" value="GSK3B-INTERACTING PROTEIN"/>
    <property type="match status" value="1"/>
</dbReference>
<dbReference type="PANTHER" id="PTHR12490:SF4">
    <property type="entry name" value="GSK3B-INTERACTING PROTEIN"/>
    <property type="match status" value="1"/>
</dbReference>
<dbReference type="Pfam" id="PF05303">
    <property type="entry name" value="GSKIP_dom"/>
    <property type="match status" value="1"/>
</dbReference>
<dbReference type="SUPFAM" id="SSF103107">
    <property type="entry name" value="Hypothetical protein c14orf129, hspc210"/>
    <property type="match status" value="1"/>
</dbReference>
<protein>
    <recommendedName>
        <fullName>GSK3-beta interaction protein</fullName>
        <shortName>GSKIP</shortName>
    </recommendedName>
</protein>
<organism>
    <name type="scientific">Xenopus tropicalis</name>
    <name type="common">Western clawed frog</name>
    <name type="synonym">Silurana tropicalis</name>
    <dbReference type="NCBI Taxonomy" id="8364"/>
    <lineage>
        <taxon>Eukaryota</taxon>
        <taxon>Metazoa</taxon>
        <taxon>Chordata</taxon>
        <taxon>Craniata</taxon>
        <taxon>Vertebrata</taxon>
        <taxon>Euteleostomi</taxon>
        <taxon>Amphibia</taxon>
        <taxon>Batrachia</taxon>
        <taxon>Anura</taxon>
        <taxon>Pipoidea</taxon>
        <taxon>Pipidae</taxon>
        <taxon>Xenopodinae</taxon>
        <taxon>Xenopus</taxon>
        <taxon>Silurana</taxon>
    </lineage>
</organism>
<gene>
    <name type="primary">gskip</name>
</gene>
<proteinExistence type="evidence at transcript level"/>
<feature type="chain" id="PRO_0000359878" description="GSK3-beta interaction protein">
    <location>
        <begin position="1"/>
        <end position="139"/>
    </location>
</feature>
<accession>A4IIW5</accession>
<name>GSKIP_XENTR</name>
<reference key="1">
    <citation type="submission" date="2007-03" db="EMBL/GenBank/DDBJ databases">
        <authorList>
            <consortium name="NIH - Xenopus Gene Collection (XGC) project"/>
        </authorList>
    </citation>
    <scope>NUCLEOTIDE SEQUENCE [LARGE SCALE MRNA]</scope>
    <source>
        <tissue>Brain</tissue>
    </source>
</reference>
<sequence length="139" mass="15515">MEVDYNPMDLPVNTVYEDESEFRDLEGTDVKDMCLEAEAIVNDVLFAVGNMFVSKTLPCAVDVAYINVEIKEGTRYCLELTDAGLRVAGYAFDHLAEGLCSQYHETVYSLLDSLSPAYREAFGNALLQRLEALKRDGQS</sequence>